<evidence type="ECO:0000255" key="1">
    <source>
        <dbReference type="HAMAP-Rule" id="MF_01366"/>
    </source>
</evidence>
<evidence type="ECO:0000305" key="2"/>
<gene>
    <name evidence="1" type="primary">rplM</name>
    <name type="ordered locus">BRE_342</name>
</gene>
<accession>B5RRF3</accession>
<keyword id="KW-0687">Ribonucleoprotein</keyword>
<keyword id="KW-0689">Ribosomal protein</keyword>
<dbReference type="EMBL" id="CP000993">
    <property type="protein sequence ID" value="ACH94587.1"/>
    <property type="molecule type" value="Genomic_DNA"/>
</dbReference>
<dbReference type="RefSeq" id="WP_012538830.1">
    <property type="nucleotide sequence ID" value="NC_011244.1"/>
</dbReference>
<dbReference type="SMR" id="B5RRF3"/>
<dbReference type="KEGG" id="bre:BRE_342"/>
<dbReference type="HOGENOM" id="CLU_082184_2_2_12"/>
<dbReference type="Proteomes" id="UP000000612">
    <property type="component" value="Chromosome"/>
</dbReference>
<dbReference type="GO" id="GO:0022625">
    <property type="term" value="C:cytosolic large ribosomal subunit"/>
    <property type="evidence" value="ECO:0007669"/>
    <property type="project" value="TreeGrafter"/>
</dbReference>
<dbReference type="GO" id="GO:0003729">
    <property type="term" value="F:mRNA binding"/>
    <property type="evidence" value="ECO:0007669"/>
    <property type="project" value="TreeGrafter"/>
</dbReference>
<dbReference type="GO" id="GO:0003735">
    <property type="term" value="F:structural constituent of ribosome"/>
    <property type="evidence" value="ECO:0007669"/>
    <property type="project" value="InterPro"/>
</dbReference>
<dbReference type="GO" id="GO:0017148">
    <property type="term" value="P:negative regulation of translation"/>
    <property type="evidence" value="ECO:0007669"/>
    <property type="project" value="TreeGrafter"/>
</dbReference>
<dbReference type="GO" id="GO:0006412">
    <property type="term" value="P:translation"/>
    <property type="evidence" value="ECO:0007669"/>
    <property type="project" value="UniProtKB-UniRule"/>
</dbReference>
<dbReference type="CDD" id="cd00392">
    <property type="entry name" value="Ribosomal_L13"/>
    <property type="match status" value="1"/>
</dbReference>
<dbReference type="Gene3D" id="3.90.1180.10">
    <property type="entry name" value="Ribosomal protein L13"/>
    <property type="match status" value="1"/>
</dbReference>
<dbReference type="HAMAP" id="MF_01366">
    <property type="entry name" value="Ribosomal_uL13"/>
    <property type="match status" value="1"/>
</dbReference>
<dbReference type="InterPro" id="IPR005822">
    <property type="entry name" value="Ribosomal_uL13"/>
</dbReference>
<dbReference type="InterPro" id="IPR005823">
    <property type="entry name" value="Ribosomal_uL13_bac-type"/>
</dbReference>
<dbReference type="InterPro" id="IPR023563">
    <property type="entry name" value="Ribosomal_uL13_CS"/>
</dbReference>
<dbReference type="InterPro" id="IPR036899">
    <property type="entry name" value="Ribosomal_uL13_sf"/>
</dbReference>
<dbReference type="NCBIfam" id="TIGR01066">
    <property type="entry name" value="rplM_bact"/>
    <property type="match status" value="1"/>
</dbReference>
<dbReference type="PANTHER" id="PTHR11545:SF2">
    <property type="entry name" value="LARGE RIBOSOMAL SUBUNIT PROTEIN UL13M"/>
    <property type="match status" value="1"/>
</dbReference>
<dbReference type="PANTHER" id="PTHR11545">
    <property type="entry name" value="RIBOSOMAL PROTEIN L13"/>
    <property type="match status" value="1"/>
</dbReference>
<dbReference type="Pfam" id="PF00572">
    <property type="entry name" value="Ribosomal_L13"/>
    <property type="match status" value="1"/>
</dbReference>
<dbReference type="PIRSF" id="PIRSF002181">
    <property type="entry name" value="Ribosomal_L13"/>
    <property type="match status" value="1"/>
</dbReference>
<dbReference type="SUPFAM" id="SSF52161">
    <property type="entry name" value="Ribosomal protein L13"/>
    <property type="match status" value="1"/>
</dbReference>
<dbReference type="PROSITE" id="PS00783">
    <property type="entry name" value="RIBOSOMAL_L13"/>
    <property type="match status" value="1"/>
</dbReference>
<protein>
    <recommendedName>
        <fullName evidence="1">Large ribosomal subunit protein uL13</fullName>
    </recommendedName>
    <alternativeName>
        <fullName evidence="2">50S ribosomal protein L13</fullName>
    </alternativeName>
</protein>
<proteinExistence type="inferred from homology"/>
<name>RL13_BORRA</name>
<reference key="1">
    <citation type="journal article" date="2008" name="PLoS Genet.">
        <title>The genome of Borrelia recurrentis, the agent of deadly louse-borne relapsing fever, is a degraded subset of tick-borne Borrelia duttonii.</title>
        <authorList>
            <person name="Lescot M."/>
            <person name="Audic S."/>
            <person name="Robert C."/>
            <person name="Nguyen T.T."/>
            <person name="Blanc G."/>
            <person name="Cutler S.J."/>
            <person name="Wincker P."/>
            <person name="Couloux A."/>
            <person name="Claverie J.-M."/>
            <person name="Raoult D."/>
            <person name="Drancourt M."/>
        </authorList>
    </citation>
    <scope>NUCLEOTIDE SEQUENCE [LARGE SCALE GENOMIC DNA]</scope>
    <source>
        <strain>A1</strain>
    </source>
</reference>
<sequence length="149" mass="17303">MNKMTNNKTIWMKPRYVKKKWYVIDASDKVLGRIATEAIKILRGKHKPYYTPHQDLGDNVVIINASKVKLTGKKYFQKIYYRHSRYPGGLYSDTYRTLSERKPTAPLEIAIKGMLPKGPLGRELFRNLKVFADANHKLSSQNLYKLEAN</sequence>
<comment type="function">
    <text evidence="1">This protein is one of the early assembly proteins of the 50S ribosomal subunit, although it is not seen to bind rRNA by itself. It is important during the early stages of 50S assembly.</text>
</comment>
<comment type="subunit">
    <text evidence="1">Part of the 50S ribosomal subunit.</text>
</comment>
<comment type="similarity">
    <text evidence="1">Belongs to the universal ribosomal protein uL13 family.</text>
</comment>
<feature type="chain" id="PRO_1000144097" description="Large ribosomal subunit protein uL13">
    <location>
        <begin position="1"/>
        <end position="149"/>
    </location>
</feature>
<organism>
    <name type="scientific">Borrelia recurrentis (strain A1)</name>
    <dbReference type="NCBI Taxonomy" id="412418"/>
    <lineage>
        <taxon>Bacteria</taxon>
        <taxon>Pseudomonadati</taxon>
        <taxon>Spirochaetota</taxon>
        <taxon>Spirochaetia</taxon>
        <taxon>Spirochaetales</taxon>
        <taxon>Borreliaceae</taxon>
        <taxon>Borrelia</taxon>
    </lineage>
</organism>